<dbReference type="EMBL" id="AF271896">
    <property type="protein sequence ID" value="AAF75792.1"/>
    <property type="molecule type" value="mRNA"/>
</dbReference>
<dbReference type="EMBL" id="BC122703">
    <property type="protein sequence ID" value="AAI22704.1"/>
    <property type="molecule type" value="mRNA"/>
</dbReference>
<dbReference type="RefSeq" id="NP_776762.1">
    <property type="nucleotide sequence ID" value="NM_174337.2"/>
</dbReference>
<dbReference type="SMR" id="Q9MZ06"/>
<dbReference type="FunCoup" id="Q9MZ06">
    <property type="interactions" value="34"/>
</dbReference>
<dbReference type="STRING" id="9913.ENSBTAP00000042121"/>
<dbReference type="GlyCosmos" id="Q9MZ06">
    <property type="glycosylation" value="2 sites, No reported glycans"/>
</dbReference>
<dbReference type="GlyGen" id="Q9MZ06">
    <property type="glycosylation" value="2 sites"/>
</dbReference>
<dbReference type="iPTMnet" id="Q9MZ06"/>
<dbReference type="PaxDb" id="9913-ENSBTAP00000042121"/>
<dbReference type="PeptideAtlas" id="Q9MZ06"/>
<dbReference type="Ensembl" id="ENSBTAT00000044642.4">
    <property type="protein sequence ID" value="ENSBTAP00000042121.2"/>
    <property type="gene ID" value="ENSBTAG00000031497.4"/>
</dbReference>
<dbReference type="Ensembl" id="ENSBTAT00000088243.1">
    <property type="protein sequence ID" value="ENSBTAP00000101735.1"/>
    <property type="gene ID" value="ENSBTAG00000031497.4"/>
</dbReference>
<dbReference type="Ensembl" id="ENSBTAT00000107910.1">
    <property type="protein sequence ID" value="ENSBTAP00000095009.1"/>
    <property type="gene ID" value="ENSBTAG00000031497.4"/>
</dbReference>
<dbReference type="Ensembl" id="ENSBTAT00000126120.1">
    <property type="protein sequence ID" value="ENSBTAP00000077200.1"/>
    <property type="gene ID" value="ENSBTAG00000031497.4"/>
</dbReference>
<dbReference type="Ensembl" id="ENSBTAT00000131984.1">
    <property type="protein sequence ID" value="ENSBTAP00000090470.1"/>
    <property type="gene ID" value="ENSBTAG00000031497.4"/>
</dbReference>
<dbReference type="GeneID" id="281812"/>
<dbReference type="KEGG" id="bta:281812"/>
<dbReference type="CTD" id="9982"/>
<dbReference type="VEuPathDB" id="HostDB:ENSBTAG00000031497"/>
<dbReference type="eggNOG" id="ENOG502RZQ6">
    <property type="taxonomic scope" value="Eukaryota"/>
</dbReference>
<dbReference type="GeneTree" id="ENSGT00940000154372"/>
<dbReference type="HOGENOM" id="CLU_102227_0_0_1"/>
<dbReference type="InParanoid" id="Q9MZ06"/>
<dbReference type="OMA" id="VYWKQIG"/>
<dbReference type="OrthoDB" id="8875908at2759"/>
<dbReference type="TreeFam" id="TF335877"/>
<dbReference type="Reactome" id="R-BTA-190377">
    <property type="pathway name" value="FGFR2b ligand binding and activation"/>
</dbReference>
<dbReference type="Proteomes" id="UP000009136">
    <property type="component" value="Chromosome 6"/>
</dbReference>
<dbReference type="Bgee" id="ENSBTAG00000031497">
    <property type="expression patterns" value="Expressed in rumen papilla and 45 other cell types or tissues"/>
</dbReference>
<dbReference type="GO" id="GO:0005576">
    <property type="term" value="C:extracellular region"/>
    <property type="evidence" value="ECO:0007669"/>
    <property type="project" value="UniProtKB-SubCell"/>
</dbReference>
<dbReference type="GO" id="GO:0005886">
    <property type="term" value="C:plasma membrane"/>
    <property type="evidence" value="ECO:0007669"/>
    <property type="project" value="UniProtKB-SubCell"/>
</dbReference>
<dbReference type="GO" id="GO:0019838">
    <property type="term" value="F:growth factor binding"/>
    <property type="evidence" value="ECO:0000318"/>
    <property type="project" value="GO_Central"/>
</dbReference>
<dbReference type="GO" id="GO:0007267">
    <property type="term" value="P:cell-cell signaling"/>
    <property type="evidence" value="ECO:0000318"/>
    <property type="project" value="GO_Central"/>
</dbReference>
<dbReference type="GO" id="GO:1903589">
    <property type="term" value="P:positive regulation of blood vessel endothelial cell proliferation involved in sprouting angiogenesis"/>
    <property type="evidence" value="ECO:0007669"/>
    <property type="project" value="Ensembl"/>
</dbReference>
<dbReference type="GO" id="GO:0090050">
    <property type="term" value="P:positive regulation of cell migration involved in sprouting angiogenesis"/>
    <property type="evidence" value="ECO:0007669"/>
    <property type="project" value="Ensembl"/>
</dbReference>
<dbReference type="InterPro" id="IPR010510">
    <property type="entry name" value="FGF1-bd"/>
</dbReference>
<dbReference type="PANTHER" id="PTHR15258">
    <property type="entry name" value="FGF BINDING PROTEIN-RELATED"/>
    <property type="match status" value="1"/>
</dbReference>
<dbReference type="PANTHER" id="PTHR15258:SF2">
    <property type="entry name" value="FIBROBLAST GROWTH FACTOR-BINDING PROTEIN 1"/>
    <property type="match status" value="1"/>
</dbReference>
<dbReference type="Pfam" id="PF06473">
    <property type="entry name" value="FGF-BP1"/>
    <property type="match status" value="1"/>
</dbReference>
<proteinExistence type="evidence at protein level"/>
<protein>
    <recommendedName>
        <fullName>Fibroblast growth factor-binding protein 1</fullName>
        <shortName>FGF-BP</shortName>
        <shortName>FGF-BP1</shortName>
        <shortName>FGF-binding protein 1</shortName>
        <shortName>FGFBP-1</shortName>
    </recommendedName>
</protein>
<gene>
    <name type="primary">FGFBP1</name>
    <name type="synonym">FGFBP</name>
</gene>
<organism>
    <name type="scientific">Bos taurus</name>
    <name type="common">Bovine</name>
    <dbReference type="NCBI Taxonomy" id="9913"/>
    <lineage>
        <taxon>Eukaryota</taxon>
        <taxon>Metazoa</taxon>
        <taxon>Chordata</taxon>
        <taxon>Craniata</taxon>
        <taxon>Vertebrata</taxon>
        <taxon>Euteleostomi</taxon>
        <taxon>Mammalia</taxon>
        <taxon>Eutheria</taxon>
        <taxon>Laurasiatheria</taxon>
        <taxon>Artiodactyla</taxon>
        <taxon>Ruminantia</taxon>
        <taxon>Pecora</taxon>
        <taxon>Bovidae</taxon>
        <taxon>Bovinae</taxon>
        <taxon>Bos</taxon>
    </lineage>
</organism>
<keyword id="KW-1003">Cell membrane</keyword>
<keyword id="KW-0903">Direct protein sequencing</keyword>
<keyword id="KW-1015">Disulfide bond</keyword>
<keyword id="KW-0325">Glycoprotein</keyword>
<keyword id="KW-0340">Growth factor binding</keyword>
<keyword id="KW-0472">Membrane</keyword>
<keyword id="KW-1185">Reference proteome</keyword>
<keyword id="KW-0964">Secreted</keyword>
<keyword id="KW-0732">Signal</keyword>
<name>FGFP1_BOVIN</name>
<evidence type="ECO:0000250" key="1"/>
<evidence type="ECO:0000250" key="2">
    <source>
        <dbReference type="UniProtKB" id="Q14512"/>
    </source>
</evidence>
<evidence type="ECO:0000255" key="3"/>
<evidence type="ECO:0000256" key="4">
    <source>
        <dbReference type="SAM" id="MobiDB-lite"/>
    </source>
</evidence>
<evidence type="ECO:0000269" key="5">
    <source>
    </source>
</evidence>
<evidence type="ECO:0000305" key="6"/>
<sequence>MRTHGLTLLSLLLLAVPMLLVEAKKEGRNRRGSKASADESLALGKPGKEPRSQPTNYPIKGKFVTPDHADCRWAVTKQEEGIVLKVECTQRDNTFSCFFTGNPTSCLELHKNNAYWKQIGRNLRSQKVICGDAKSVLKTRVCRKKFPESNLKLVNSTLIRIKKPSQELMEPSPMDTVEVTTSSSPEKTQTMATKDPQCEEEDLKNQRKAALEYCGETWGSLCNFFLSMVQGSSC</sequence>
<comment type="function">
    <text evidence="1">Acts as a carrier protein that release fibroblast-binding factors (FGFs) from the extracellular matrix (EM) storage and thus enhance the mitogenic activity of FGFs. Enhances FGF2 signaling during tissue repair, angiogenesis and in tumor growth (By similarity).</text>
</comment>
<comment type="subunit">
    <text evidence="1 5">Found in a complex with FGFBP1, FGF1 and FGF2. Interacts with FGF1, FGF7, FGF10, FGF22 and HSPG2 (By similarity). Interacts with FGF2.</text>
</comment>
<comment type="subcellular location">
    <subcellularLocation>
        <location evidence="2">Secreted</location>
        <location evidence="2">Extracellular space</location>
    </subcellularLocation>
    <subcellularLocation>
        <location evidence="2">Cell membrane</location>
        <topology evidence="2">Peripheral membrane protein</topology>
    </subcellularLocation>
    <text evidence="2">Extracellular and plasma membrane-associated.</text>
</comment>
<comment type="similarity">
    <text evidence="6">Belongs to the fibroblast growth factor-binding protein family.</text>
</comment>
<reference key="1">
    <citation type="journal article" date="2000" name="J. Biol. Chem.">
        <title>Structural characterization of the fibroblast growth factor-binding protein purified from bovine prepartum mammary gland secretion.</title>
        <authorList>
            <person name="Lametsch R."/>
            <person name="Rasmussen J.T."/>
            <person name="Johnsen L.B."/>
            <person name="Purup S."/>
            <person name="Sejrsen K."/>
            <person name="Petersen T.E."/>
            <person name="Heegaard C.W."/>
        </authorList>
    </citation>
    <scope>NUCLEOTIDE SEQUENCE [MRNA]</scope>
    <scope>PROTEIN SEQUENCE OF 32-81; 88-135; 149-167 AND 208-234</scope>
    <scope>INTERACTION WITH FGF2</scope>
    <scope>GLYCOSYLATION AT ASN-155 AND SER-172</scope>
    <scope>DISULFIDE BONDS</scope>
    <source>
        <tissue>Mammary gland</tissue>
    </source>
</reference>
<reference key="2">
    <citation type="submission" date="2006-08" db="EMBL/GenBank/DDBJ databases">
        <authorList>
            <consortium name="NIH - Mammalian Gene Collection (MGC) project"/>
        </authorList>
    </citation>
    <scope>NUCLEOTIDE SEQUENCE [LARGE SCALE MRNA]</scope>
    <source>
        <strain>Crossbred X Angus</strain>
        <tissue>Ileum</tissue>
    </source>
</reference>
<accession>Q9MZ06</accession>
<accession>Q0IID1</accession>
<feature type="signal peptide" evidence="3">
    <location>
        <begin position="1"/>
        <end position="23"/>
    </location>
</feature>
<feature type="chain" id="PRO_0000245511" description="Fibroblast growth factor-binding protein 1">
    <location>
        <begin position="24"/>
        <end position="234"/>
    </location>
</feature>
<feature type="region of interest" description="Disordered" evidence="4">
    <location>
        <begin position="25"/>
        <end position="59"/>
    </location>
</feature>
<feature type="region of interest" description="Disordered" evidence="4">
    <location>
        <begin position="169"/>
        <end position="200"/>
    </location>
</feature>
<feature type="region of interest" description="Sufficient for interaction with FGF2 and FGF2-induced effects" evidence="1">
    <location>
        <begin position="194"/>
        <end position="234"/>
    </location>
</feature>
<feature type="compositionally biased region" description="Polar residues" evidence="4">
    <location>
        <begin position="178"/>
        <end position="192"/>
    </location>
</feature>
<feature type="glycosylation site" description="N-linked (GlcNAc...) asparagine" evidence="5">
    <location>
        <position position="155"/>
    </location>
</feature>
<feature type="glycosylation site" description="O-linked (GalNAc...) serine" evidence="5">
    <location>
        <position position="172"/>
    </location>
</feature>
<feature type="disulfide bond" evidence="5">
    <location>
        <begin position="71"/>
        <end position="88"/>
    </location>
</feature>
<feature type="disulfide bond" evidence="5">
    <location>
        <begin position="97"/>
        <end position="130"/>
    </location>
</feature>
<feature type="disulfide bond" evidence="5">
    <location>
        <begin position="106"/>
        <end position="142"/>
    </location>
</feature>
<feature type="disulfide bond" evidence="5">
    <location>
        <begin position="198"/>
        <end position="234"/>
    </location>
</feature>
<feature type="disulfide bond" evidence="5">
    <location>
        <begin position="214"/>
        <end position="222"/>
    </location>
</feature>